<evidence type="ECO:0000255" key="1">
    <source>
        <dbReference type="HAMAP-Rule" id="MF_01220"/>
    </source>
</evidence>
<dbReference type="EC" id="2.7.4.22" evidence="1"/>
<dbReference type="EMBL" id="CP000510">
    <property type="protein sequence ID" value="ABM04676.1"/>
    <property type="molecule type" value="Genomic_DNA"/>
</dbReference>
<dbReference type="RefSeq" id="WP_011771230.1">
    <property type="nucleotide sequence ID" value="NC_008709.1"/>
</dbReference>
<dbReference type="SMR" id="A1SYW1"/>
<dbReference type="STRING" id="357804.Ping_2974"/>
<dbReference type="KEGG" id="pin:Ping_2974"/>
<dbReference type="eggNOG" id="COG0528">
    <property type="taxonomic scope" value="Bacteria"/>
</dbReference>
<dbReference type="HOGENOM" id="CLU_033861_0_0_6"/>
<dbReference type="OrthoDB" id="9807458at2"/>
<dbReference type="UniPathway" id="UPA00159">
    <property type="reaction ID" value="UER00275"/>
</dbReference>
<dbReference type="Proteomes" id="UP000000639">
    <property type="component" value="Chromosome"/>
</dbReference>
<dbReference type="GO" id="GO:0005829">
    <property type="term" value="C:cytosol"/>
    <property type="evidence" value="ECO:0007669"/>
    <property type="project" value="TreeGrafter"/>
</dbReference>
<dbReference type="GO" id="GO:0005524">
    <property type="term" value="F:ATP binding"/>
    <property type="evidence" value="ECO:0007669"/>
    <property type="project" value="UniProtKB-KW"/>
</dbReference>
<dbReference type="GO" id="GO:0033862">
    <property type="term" value="F:UMP kinase activity"/>
    <property type="evidence" value="ECO:0007669"/>
    <property type="project" value="UniProtKB-EC"/>
</dbReference>
<dbReference type="GO" id="GO:0044210">
    <property type="term" value="P:'de novo' CTP biosynthetic process"/>
    <property type="evidence" value="ECO:0007669"/>
    <property type="project" value="UniProtKB-UniRule"/>
</dbReference>
<dbReference type="GO" id="GO:0006225">
    <property type="term" value="P:UDP biosynthetic process"/>
    <property type="evidence" value="ECO:0007669"/>
    <property type="project" value="TreeGrafter"/>
</dbReference>
<dbReference type="CDD" id="cd04254">
    <property type="entry name" value="AAK_UMPK-PyrH-Ec"/>
    <property type="match status" value="1"/>
</dbReference>
<dbReference type="FunFam" id="3.40.1160.10:FF:000001">
    <property type="entry name" value="Uridylate kinase"/>
    <property type="match status" value="1"/>
</dbReference>
<dbReference type="Gene3D" id="3.40.1160.10">
    <property type="entry name" value="Acetylglutamate kinase-like"/>
    <property type="match status" value="1"/>
</dbReference>
<dbReference type="HAMAP" id="MF_01220_B">
    <property type="entry name" value="PyrH_B"/>
    <property type="match status" value="1"/>
</dbReference>
<dbReference type="InterPro" id="IPR036393">
    <property type="entry name" value="AceGlu_kinase-like_sf"/>
</dbReference>
<dbReference type="InterPro" id="IPR001048">
    <property type="entry name" value="Asp/Glu/Uridylate_kinase"/>
</dbReference>
<dbReference type="InterPro" id="IPR011817">
    <property type="entry name" value="Uridylate_kinase"/>
</dbReference>
<dbReference type="InterPro" id="IPR015963">
    <property type="entry name" value="Uridylate_kinase_bac"/>
</dbReference>
<dbReference type="NCBIfam" id="TIGR02075">
    <property type="entry name" value="pyrH_bact"/>
    <property type="match status" value="1"/>
</dbReference>
<dbReference type="PANTHER" id="PTHR42833">
    <property type="entry name" value="URIDYLATE KINASE"/>
    <property type="match status" value="1"/>
</dbReference>
<dbReference type="PANTHER" id="PTHR42833:SF4">
    <property type="entry name" value="URIDYLATE KINASE PUMPKIN, CHLOROPLASTIC"/>
    <property type="match status" value="1"/>
</dbReference>
<dbReference type="Pfam" id="PF00696">
    <property type="entry name" value="AA_kinase"/>
    <property type="match status" value="1"/>
</dbReference>
<dbReference type="PIRSF" id="PIRSF005650">
    <property type="entry name" value="Uridylate_kin"/>
    <property type="match status" value="1"/>
</dbReference>
<dbReference type="SUPFAM" id="SSF53633">
    <property type="entry name" value="Carbamate kinase-like"/>
    <property type="match status" value="1"/>
</dbReference>
<name>PYRH_PSYIN</name>
<sequence>MKTKPKSAYRRILLKLSGEALVGEEGFGIDPKVLDRMALEIKSLIEVGVQVGLVIGGGNIFRGAGLAEAGMNRVVGDHMGMLATVMNGLAMRDALQRSHVNSRLMSAIPLNGVCDDYNWAKAIRYLKQGTVVIFAAGTGNPFFTTDSAACLRGIEIEADAVLKGTKVDGVFDADPAKNPDAKLYKEIDYQLVLEKELKVMDLAAFTLARDHSLPIRVFNMNKPGALNRVVLGEDEGTTIKHCETIIEKE</sequence>
<organism>
    <name type="scientific">Psychromonas ingrahamii (strain DSM 17664 / CCUG 51855 / 37)</name>
    <dbReference type="NCBI Taxonomy" id="357804"/>
    <lineage>
        <taxon>Bacteria</taxon>
        <taxon>Pseudomonadati</taxon>
        <taxon>Pseudomonadota</taxon>
        <taxon>Gammaproteobacteria</taxon>
        <taxon>Alteromonadales</taxon>
        <taxon>Psychromonadaceae</taxon>
        <taxon>Psychromonas</taxon>
    </lineage>
</organism>
<proteinExistence type="inferred from homology"/>
<reference key="1">
    <citation type="journal article" date="2008" name="BMC Genomics">
        <title>Genomics of an extreme psychrophile, Psychromonas ingrahamii.</title>
        <authorList>
            <person name="Riley M."/>
            <person name="Staley J.T."/>
            <person name="Danchin A."/>
            <person name="Wang T.Z."/>
            <person name="Brettin T.S."/>
            <person name="Hauser L.J."/>
            <person name="Land M.L."/>
            <person name="Thompson L.S."/>
        </authorList>
    </citation>
    <scope>NUCLEOTIDE SEQUENCE [LARGE SCALE GENOMIC DNA]</scope>
    <source>
        <strain>DSM 17664 / CCUG 51855 / 37</strain>
    </source>
</reference>
<comment type="function">
    <text evidence="1">Catalyzes the reversible phosphorylation of UMP to UDP.</text>
</comment>
<comment type="catalytic activity">
    <reaction evidence="1">
        <text>UMP + ATP = UDP + ADP</text>
        <dbReference type="Rhea" id="RHEA:24400"/>
        <dbReference type="ChEBI" id="CHEBI:30616"/>
        <dbReference type="ChEBI" id="CHEBI:57865"/>
        <dbReference type="ChEBI" id="CHEBI:58223"/>
        <dbReference type="ChEBI" id="CHEBI:456216"/>
        <dbReference type="EC" id="2.7.4.22"/>
    </reaction>
</comment>
<comment type="activity regulation">
    <text evidence="1">Allosterically activated by GTP. Inhibited by UTP.</text>
</comment>
<comment type="pathway">
    <text evidence="1">Pyrimidine metabolism; CTP biosynthesis via de novo pathway; UDP from UMP (UMPK route): step 1/1.</text>
</comment>
<comment type="subunit">
    <text evidence="1">Homohexamer.</text>
</comment>
<comment type="subcellular location">
    <subcellularLocation>
        <location evidence="1">Cytoplasm</location>
    </subcellularLocation>
</comment>
<comment type="similarity">
    <text evidence="1">Belongs to the UMP kinase family.</text>
</comment>
<protein>
    <recommendedName>
        <fullName evidence="1">Uridylate kinase</fullName>
        <shortName evidence="1">UK</shortName>
        <ecNumber evidence="1">2.7.4.22</ecNumber>
    </recommendedName>
    <alternativeName>
        <fullName evidence="1">Uridine monophosphate kinase</fullName>
        <shortName evidence="1">UMP kinase</shortName>
        <shortName evidence="1">UMPK</shortName>
    </alternativeName>
</protein>
<feature type="chain" id="PRO_1000053990" description="Uridylate kinase">
    <location>
        <begin position="1"/>
        <end position="249"/>
    </location>
</feature>
<feature type="region of interest" description="Involved in allosteric activation by GTP" evidence="1">
    <location>
        <begin position="23"/>
        <end position="28"/>
    </location>
</feature>
<feature type="binding site" evidence="1">
    <location>
        <begin position="15"/>
        <end position="18"/>
    </location>
    <ligand>
        <name>ATP</name>
        <dbReference type="ChEBI" id="CHEBI:30616"/>
    </ligand>
</feature>
<feature type="binding site" evidence="1">
    <location>
        <position position="57"/>
    </location>
    <ligand>
        <name>UMP</name>
        <dbReference type="ChEBI" id="CHEBI:57865"/>
    </ligand>
</feature>
<feature type="binding site" evidence="1">
    <location>
        <position position="58"/>
    </location>
    <ligand>
        <name>ATP</name>
        <dbReference type="ChEBI" id="CHEBI:30616"/>
    </ligand>
</feature>
<feature type="binding site" evidence="1">
    <location>
        <position position="62"/>
    </location>
    <ligand>
        <name>ATP</name>
        <dbReference type="ChEBI" id="CHEBI:30616"/>
    </ligand>
</feature>
<feature type="binding site" evidence="1">
    <location>
        <position position="77"/>
    </location>
    <ligand>
        <name>UMP</name>
        <dbReference type="ChEBI" id="CHEBI:57865"/>
    </ligand>
</feature>
<feature type="binding site" evidence="1">
    <location>
        <begin position="138"/>
        <end position="145"/>
    </location>
    <ligand>
        <name>UMP</name>
        <dbReference type="ChEBI" id="CHEBI:57865"/>
    </ligand>
</feature>
<feature type="binding site" evidence="1">
    <location>
        <position position="165"/>
    </location>
    <ligand>
        <name>ATP</name>
        <dbReference type="ChEBI" id="CHEBI:30616"/>
    </ligand>
</feature>
<feature type="binding site" evidence="1">
    <location>
        <position position="171"/>
    </location>
    <ligand>
        <name>ATP</name>
        <dbReference type="ChEBI" id="CHEBI:30616"/>
    </ligand>
</feature>
<feature type="binding site" evidence="1">
    <location>
        <position position="174"/>
    </location>
    <ligand>
        <name>ATP</name>
        <dbReference type="ChEBI" id="CHEBI:30616"/>
    </ligand>
</feature>
<gene>
    <name evidence="1" type="primary">pyrH</name>
    <name type="ordered locus">Ping_2974</name>
</gene>
<keyword id="KW-0021">Allosteric enzyme</keyword>
<keyword id="KW-0067">ATP-binding</keyword>
<keyword id="KW-0963">Cytoplasm</keyword>
<keyword id="KW-0418">Kinase</keyword>
<keyword id="KW-0547">Nucleotide-binding</keyword>
<keyword id="KW-0665">Pyrimidine biosynthesis</keyword>
<keyword id="KW-1185">Reference proteome</keyword>
<keyword id="KW-0808">Transferase</keyword>
<accession>A1SYW1</accession>